<protein>
    <recommendedName>
        <fullName evidence="1">2,3-bisphosphoglycerate-dependent phosphoglycerate mutase</fullName>
        <shortName evidence="1">BPG-dependent PGAM</shortName>
        <shortName evidence="1">PGAM</shortName>
        <shortName evidence="1">Phosphoglyceromutase</shortName>
        <shortName evidence="1">dPGM</shortName>
        <ecNumber evidence="1">5.4.2.11</ecNumber>
    </recommendedName>
</protein>
<accession>B7NNH7</accession>
<evidence type="ECO:0000255" key="1">
    <source>
        <dbReference type="HAMAP-Rule" id="MF_01039"/>
    </source>
</evidence>
<sequence>MAVTKLVLVRHGESQWNKENRFTGWYDVDLSEKGVSEAKAAGKLLKEEGYSFDFAYTSVLKRAIHTLWNVLDELDQAWLPVEKSWKLNERHYGALQGLNKAETAEKYGDEQVKQWRRGFAVTPPELTKDDERYPGHDPRYAKLSEKELPLTESLALTIDRVIPYWNETILPRMKSGERVIIAAHGNSLRALVKYLDNMSEEEILELNIPTGVPLVYEFDENFKPLKRYYLGNADEIAAKAAAVANQGKAK</sequence>
<feature type="chain" id="PRO_1000135945" description="2,3-bisphosphoglycerate-dependent phosphoglycerate mutase">
    <location>
        <begin position="1"/>
        <end position="250"/>
    </location>
</feature>
<feature type="active site" description="Tele-phosphohistidine intermediate" evidence="1">
    <location>
        <position position="11"/>
    </location>
</feature>
<feature type="active site" description="Proton donor/acceptor" evidence="1">
    <location>
        <position position="89"/>
    </location>
</feature>
<feature type="binding site" evidence="1">
    <location>
        <begin position="10"/>
        <end position="17"/>
    </location>
    <ligand>
        <name>substrate</name>
    </ligand>
</feature>
<feature type="binding site" evidence="1">
    <location>
        <begin position="23"/>
        <end position="24"/>
    </location>
    <ligand>
        <name>substrate</name>
    </ligand>
</feature>
<feature type="binding site" evidence="1">
    <location>
        <position position="62"/>
    </location>
    <ligand>
        <name>substrate</name>
    </ligand>
</feature>
<feature type="binding site" evidence="1">
    <location>
        <begin position="89"/>
        <end position="92"/>
    </location>
    <ligand>
        <name>substrate</name>
    </ligand>
</feature>
<feature type="binding site" evidence="1">
    <location>
        <position position="100"/>
    </location>
    <ligand>
        <name>substrate</name>
    </ligand>
</feature>
<feature type="binding site" evidence="1">
    <location>
        <begin position="116"/>
        <end position="117"/>
    </location>
    <ligand>
        <name>substrate</name>
    </ligand>
</feature>
<feature type="binding site" evidence="1">
    <location>
        <begin position="185"/>
        <end position="186"/>
    </location>
    <ligand>
        <name>substrate</name>
    </ligand>
</feature>
<feature type="site" description="Transition state stabilizer" evidence="1">
    <location>
        <position position="184"/>
    </location>
</feature>
<reference key="1">
    <citation type="journal article" date="2009" name="PLoS Genet.">
        <title>Organised genome dynamics in the Escherichia coli species results in highly diverse adaptive paths.</title>
        <authorList>
            <person name="Touchon M."/>
            <person name="Hoede C."/>
            <person name="Tenaillon O."/>
            <person name="Barbe V."/>
            <person name="Baeriswyl S."/>
            <person name="Bidet P."/>
            <person name="Bingen E."/>
            <person name="Bonacorsi S."/>
            <person name="Bouchier C."/>
            <person name="Bouvet O."/>
            <person name="Calteau A."/>
            <person name="Chiapello H."/>
            <person name="Clermont O."/>
            <person name="Cruveiller S."/>
            <person name="Danchin A."/>
            <person name="Diard M."/>
            <person name="Dossat C."/>
            <person name="Karoui M.E."/>
            <person name="Frapy E."/>
            <person name="Garry L."/>
            <person name="Ghigo J.M."/>
            <person name="Gilles A.M."/>
            <person name="Johnson J."/>
            <person name="Le Bouguenec C."/>
            <person name="Lescat M."/>
            <person name="Mangenot S."/>
            <person name="Martinez-Jehanne V."/>
            <person name="Matic I."/>
            <person name="Nassif X."/>
            <person name="Oztas S."/>
            <person name="Petit M.A."/>
            <person name="Pichon C."/>
            <person name="Rouy Z."/>
            <person name="Ruf C.S."/>
            <person name="Schneider D."/>
            <person name="Tourret J."/>
            <person name="Vacherie B."/>
            <person name="Vallenet D."/>
            <person name="Medigue C."/>
            <person name="Rocha E.P.C."/>
            <person name="Denamur E."/>
        </authorList>
    </citation>
    <scope>NUCLEOTIDE SEQUENCE [LARGE SCALE GENOMIC DNA]</scope>
    <source>
        <strain>IAI39 / ExPEC</strain>
    </source>
</reference>
<comment type="function">
    <text evidence="1">Catalyzes the interconversion of 2-phosphoglycerate and 3-phosphoglycerate.</text>
</comment>
<comment type="catalytic activity">
    <reaction evidence="1">
        <text>(2R)-2-phosphoglycerate = (2R)-3-phosphoglycerate</text>
        <dbReference type="Rhea" id="RHEA:15901"/>
        <dbReference type="ChEBI" id="CHEBI:58272"/>
        <dbReference type="ChEBI" id="CHEBI:58289"/>
        <dbReference type="EC" id="5.4.2.11"/>
    </reaction>
</comment>
<comment type="pathway">
    <text evidence="1">Carbohydrate degradation; glycolysis; pyruvate from D-glyceraldehyde 3-phosphate: step 3/5.</text>
</comment>
<comment type="subunit">
    <text evidence="1">Homodimer.</text>
</comment>
<comment type="similarity">
    <text evidence="1">Belongs to the phosphoglycerate mutase family. BPG-dependent PGAM subfamily.</text>
</comment>
<name>GPMA_ECO7I</name>
<organism>
    <name type="scientific">Escherichia coli O7:K1 (strain IAI39 / ExPEC)</name>
    <dbReference type="NCBI Taxonomy" id="585057"/>
    <lineage>
        <taxon>Bacteria</taxon>
        <taxon>Pseudomonadati</taxon>
        <taxon>Pseudomonadota</taxon>
        <taxon>Gammaproteobacteria</taxon>
        <taxon>Enterobacterales</taxon>
        <taxon>Enterobacteriaceae</taxon>
        <taxon>Escherichia</taxon>
    </lineage>
</organism>
<dbReference type="EC" id="5.4.2.11" evidence="1"/>
<dbReference type="EMBL" id="CU928164">
    <property type="protein sequence ID" value="CAR16860.1"/>
    <property type="molecule type" value="Genomic_DNA"/>
</dbReference>
<dbReference type="RefSeq" id="WP_001295305.1">
    <property type="nucleotide sequence ID" value="NC_011750.1"/>
</dbReference>
<dbReference type="RefSeq" id="YP_002406749.1">
    <property type="nucleotide sequence ID" value="NC_011750.1"/>
</dbReference>
<dbReference type="SMR" id="B7NNH7"/>
<dbReference type="STRING" id="585057.ECIAI39_0723"/>
<dbReference type="GeneID" id="93776726"/>
<dbReference type="KEGG" id="ect:ECIAI39_0723"/>
<dbReference type="PATRIC" id="fig|585057.6.peg.766"/>
<dbReference type="HOGENOM" id="CLU_033323_1_1_6"/>
<dbReference type="UniPathway" id="UPA00109">
    <property type="reaction ID" value="UER00186"/>
</dbReference>
<dbReference type="Proteomes" id="UP000000749">
    <property type="component" value="Chromosome"/>
</dbReference>
<dbReference type="GO" id="GO:0004619">
    <property type="term" value="F:phosphoglycerate mutase activity"/>
    <property type="evidence" value="ECO:0007669"/>
    <property type="project" value="UniProtKB-EC"/>
</dbReference>
<dbReference type="GO" id="GO:0006094">
    <property type="term" value="P:gluconeogenesis"/>
    <property type="evidence" value="ECO:0007669"/>
    <property type="project" value="UniProtKB-UniRule"/>
</dbReference>
<dbReference type="GO" id="GO:0006096">
    <property type="term" value="P:glycolytic process"/>
    <property type="evidence" value="ECO:0007669"/>
    <property type="project" value="UniProtKB-UniRule"/>
</dbReference>
<dbReference type="CDD" id="cd07067">
    <property type="entry name" value="HP_PGM_like"/>
    <property type="match status" value="1"/>
</dbReference>
<dbReference type="FunFam" id="3.40.50.1240:FF:000003">
    <property type="entry name" value="2,3-bisphosphoglycerate-dependent phosphoglycerate mutase"/>
    <property type="match status" value="1"/>
</dbReference>
<dbReference type="Gene3D" id="3.40.50.1240">
    <property type="entry name" value="Phosphoglycerate mutase-like"/>
    <property type="match status" value="1"/>
</dbReference>
<dbReference type="HAMAP" id="MF_01039">
    <property type="entry name" value="PGAM_GpmA"/>
    <property type="match status" value="1"/>
</dbReference>
<dbReference type="InterPro" id="IPR013078">
    <property type="entry name" value="His_Pase_superF_clade-1"/>
</dbReference>
<dbReference type="InterPro" id="IPR029033">
    <property type="entry name" value="His_PPase_superfam"/>
</dbReference>
<dbReference type="InterPro" id="IPR001345">
    <property type="entry name" value="PG/BPGM_mutase_AS"/>
</dbReference>
<dbReference type="InterPro" id="IPR005952">
    <property type="entry name" value="Phosphogly_mut1"/>
</dbReference>
<dbReference type="NCBIfam" id="TIGR01258">
    <property type="entry name" value="pgm_1"/>
    <property type="match status" value="1"/>
</dbReference>
<dbReference type="NCBIfam" id="NF010713">
    <property type="entry name" value="PRK14115.1"/>
    <property type="match status" value="1"/>
</dbReference>
<dbReference type="PANTHER" id="PTHR11931">
    <property type="entry name" value="PHOSPHOGLYCERATE MUTASE"/>
    <property type="match status" value="1"/>
</dbReference>
<dbReference type="Pfam" id="PF00300">
    <property type="entry name" value="His_Phos_1"/>
    <property type="match status" value="1"/>
</dbReference>
<dbReference type="PIRSF" id="PIRSF000709">
    <property type="entry name" value="6PFK_2-Ptase"/>
    <property type="match status" value="1"/>
</dbReference>
<dbReference type="SMART" id="SM00855">
    <property type="entry name" value="PGAM"/>
    <property type="match status" value="1"/>
</dbReference>
<dbReference type="SUPFAM" id="SSF53254">
    <property type="entry name" value="Phosphoglycerate mutase-like"/>
    <property type="match status" value="1"/>
</dbReference>
<dbReference type="PROSITE" id="PS00175">
    <property type="entry name" value="PG_MUTASE"/>
    <property type="match status" value="1"/>
</dbReference>
<gene>
    <name evidence="1" type="primary">gpmA</name>
    <name type="ordered locus">ECIAI39_0723</name>
</gene>
<keyword id="KW-0312">Gluconeogenesis</keyword>
<keyword id="KW-0324">Glycolysis</keyword>
<keyword id="KW-0413">Isomerase</keyword>
<proteinExistence type="inferred from homology"/>